<reference key="1">
    <citation type="submission" date="2005-06" db="EMBL/GenBank/DDBJ databases">
        <title>DNA sequences of macaque genes expressed in brain or testis and its evolutionary implications.</title>
        <authorList>
            <consortium name="International consortium for macaque cDNA sequencing and analysis"/>
        </authorList>
    </citation>
    <scope>NUCLEOTIDE SEQUENCE [LARGE SCALE MRNA]</scope>
    <source>
        <tissue>Testis</tissue>
    </source>
</reference>
<sequence>MFTSTGSSGLYKAPLSKSLLLVPSALSLLLALLLPHCQKLFVYDLHAVKNDFQIWRLICGRIICLDLKDTFCSSLLIYNFRIFERRYGSRKFASFLLGSWVLSALFDFLLVEAMQYFFGITAASNLPSGFLAPVFALFVPFYCSIPRVQVAQILGPLSITNKTLIYILGLQLFTSGSYIWIVAISGLMSGLCYNSKMFQVHQVLCIPSWMAKFFSWTLEPIFSSSEPTSEARIGMGATLDIQRQQRMELLDRQLMFSQFAQGRRQRQQQGGMINWNRLFPPLRQRQNVNYQGGRQSEPAAPPPLEVSEEQVARLMEMGFSRGDALEALRASNNDLNVATNFLLQH</sequence>
<evidence type="ECO:0000250" key="1">
    <source>
        <dbReference type="UniProtKB" id="Q8NBM4"/>
    </source>
</evidence>
<evidence type="ECO:0000250" key="2">
    <source>
        <dbReference type="UniProtKB" id="Q8R1K1"/>
    </source>
</evidence>
<evidence type="ECO:0000255" key="3"/>
<evidence type="ECO:0000255" key="4">
    <source>
        <dbReference type="PROSITE-ProRule" id="PRU00212"/>
    </source>
</evidence>
<proteinExistence type="evidence at transcript level"/>
<dbReference type="EMBL" id="AB168287">
    <property type="protein sequence ID" value="BAE00411.1"/>
    <property type="molecule type" value="mRNA"/>
</dbReference>
<dbReference type="RefSeq" id="NP_001270306.1">
    <property type="nucleotide sequence ID" value="NM_001283377.1"/>
</dbReference>
<dbReference type="RefSeq" id="XP_045233252.1">
    <property type="nucleotide sequence ID" value="XM_045377317.2"/>
</dbReference>
<dbReference type="SMR" id="Q4R910"/>
<dbReference type="STRING" id="9541.ENSMFAP00000001497"/>
<dbReference type="GlyCosmos" id="Q4R910">
    <property type="glycosylation" value="1 site, No reported glycans"/>
</dbReference>
<dbReference type="GeneID" id="101866026"/>
<dbReference type="VEuPathDB" id="HostDB:ENSMFAG00000033588"/>
<dbReference type="eggNOG" id="KOG4463">
    <property type="taxonomic scope" value="Eukaryota"/>
</dbReference>
<dbReference type="OMA" id="NYQDHRP"/>
<dbReference type="Proteomes" id="UP000233100">
    <property type="component" value="Chromosome 17"/>
</dbReference>
<dbReference type="GO" id="GO:0005789">
    <property type="term" value="C:endoplasmic reticulum membrane"/>
    <property type="evidence" value="ECO:0007669"/>
    <property type="project" value="UniProtKB-SubCell"/>
</dbReference>
<dbReference type="GO" id="GO:0004252">
    <property type="term" value="F:serine-type endopeptidase activity"/>
    <property type="evidence" value="ECO:0007669"/>
    <property type="project" value="TreeGrafter"/>
</dbReference>
<dbReference type="GO" id="GO:0090090">
    <property type="term" value="P:negative regulation of canonical Wnt signaling pathway"/>
    <property type="evidence" value="ECO:0000250"/>
    <property type="project" value="UniProtKB"/>
</dbReference>
<dbReference type="GO" id="GO:0016055">
    <property type="term" value="P:Wnt signaling pathway"/>
    <property type="evidence" value="ECO:0007669"/>
    <property type="project" value="UniProtKB-KW"/>
</dbReference>
<dbReference type="CDD" id="cd14305">
    <property type="entry name" value="UBA_UBAC2"/>
    <property type="match status" value="1"/>
</dbReference>
<dbReference type="FunFam" id="1.20.1540.10:FF:000021">
    <property type="entry name" value="UBA domain containing 2"/>
    <property type="match status" value="1"/>
</dbReference>
<dbReference type="FunFam" id="1.10.8.10:FF:000074">
    <property type="entry name" value="Ubiquitin-associated domain-containing protein 2"/>
    <property type="match status" value="1"/>
</dbReference>
<dbReference type="Gene3D" id="1.10.8.10">
    <property type="entry name" value="DNA helicase RuvA subunit, C-terminal domain"/>
    <property type="match status" value="1"/>
</dbReference>
<dbReference type="Gene3D" id="1.20.1540.10">
    <property type="entry name" value="Rhomboid-like"/>
    <property type="match status" value="1"/>
</dbReference>
<dbReference type="InterPro" id="IPR035952">
    <property type="entry name" value="Rhomboid-like_sf"/>
</dbReference>
<dbReference type="InterPro" id="IPR015940">
    <property type="entry name" value="UBA"/>
</dbReference>
<dbReference type="InterPro" id="IPR009060">
    <property type="entry name" value="UBA-like_sf"/>
</dbReference>
<dbReference type="InterPro" id="IPR041928">
    <property type="entry name" value="UBA_UBAC2"/>
</dbReference>
<dbReference type="PANTHER" id="PTHR43066">
    <property type="entry name" value="RHOMBOID-RELATED PROTEIN"/>
    <property type="match status" value="1"/>
</dbReference>
<dbReference type="PANTHER" id="PTHR43066:SF21">
    <property type="entry name" value="UBIQUITIN-ASSOCIATED DOMAIN-CONTAINING PROTEIN 2"/>
    <property type="match status" value="1"/>
</dbReference>
<dbReference type="Pfam" id="PF00627">
    <property type="entry name" value="UBA"/>
    <property type="match status" value="1"/>
</dbReference>
<dbReference type="SMART" id="SM00165">
    <property type="entry name" value="UBA"/>
    <property type="match status" value="1"/>
</dbReference>
<dbReference type="SUPFAM" id="SSF144091">
    <property type="entry name" value="Rhomboid-like"/>
    <property type="match status" value="1"/>
</dbReference>
<dbReference type="SUPFAM" id="SSF46934">
    <property type="entry name" value="UBA-like"/>
    <property type="match status" value="1"/>
</dbReference>
<dbReference type="PROSITE" id="PS50030">
    <property type="entry name" value="UBA"/>
    <property type="match status" value="1"/>
</dbReference>
<feature type="signal peptide" evidence="3">
    <location>
        <begin position="1"/>
        <end position="35"/>
    </location>
</feature>
<feature type="chain" id="PRO_0000280755" description="Ubiquitin-associated domain-containing protein 2">
    <location>
        <begin position="36"/>
        <end position="345"/>
    </location>
</feature>
<feature type="topological domain" description="Extracellular" evidence="3">
    <location>
        <begin position="36"/>
        <end position="91"/>
    </location>
</feature>
<feature type="transmembrane region" description="Helical" evidence="3">
    <location>
        <begin position="92"/>
        <end position="112"/>
    </location>
</feature>
<feature type="topological domain" description="Cytoplasmic" evidence="3">
    <location>
        <begin position="113"/>
        <end position="125"/>
    </location>
</feature>
<feature type="transmembrane region" description="Helical" evidence="3">
    <location>
        <begin position="126"/>
        <end position="146"/>
    </location>
</feature>
<feature type="topological domain" description="Extracellular" evidence="3">
    <location>
        <begin position="147"/>
        <end position="163"/>
    </location>
</feature>
<feature type="transmembrane region" description="Helical" evidence="3">
    <location>
        <begin position="164"/>
        <end position="184"/>
    </location>
</feature>
<feature type="topological domain" description="Cytoplasmic" evidence="3">
    <location>
        <begin position="185"/>
        <end position="345"/>
    </location>
</feature>
<feature type="domain" description="UBA" evidence="4">
    <location>
        <begin position="305"/>
        <end position="345"/>
    </location>
</feature>
<feature type="glycosylation site" description="N-linked (GlcNAc...) asparagine" evidence="3">
    <location>
        <position position="161"/>
    </location>
</feature>
<organism>
    <name type="scientific">Macaca fascicularis</name>
    <name type="common">Crab-eating macaque</name>
    <name type="synonym">Cynomolgus monkey</name>
    <dbReference type="NCBI Taxonomy" id="9541"/>
    <lineage>
        <taxon>Eukaryota</taxon>
        <taxon>Metazoa</taxon>
        <taxon>Chordata</taxon>
        <taxon>Craniata</taxon>
        <taxon>Vertebrata</taxon>
        <taxon>Euteleostomi</taxon>
        <taxon>Mammalia</taxon>
        <taxon>Eutheria</taxon>
        <taxon>Euarchontoglires</taxon>
        <taxon>Primates</taxon>
        <taxon>Haplorrhini</taxon>
        <taxon>Catarrhini</taxon>
        <taxon>Cercopithecidae</taxon>
        <taxon>Cercopithecinae</taxon>
        <taxon>Macaca</taxon>
    </lineage>
</organism>
<protein>
    <recommendedName>
        <fullName>Ubiquitin-associated domain-containing protein 2</fullName>
        <shortName>UBA domain-containing protein 2</shortName>
    </recommendedName>
    <alternativeName>
        <fullName>Phosphoglycerate dehydrogenase-like protein 1</fullName>
    </alternativeName>
</protein>
<accession>Q4R910</accession>
<keyword id="KW-0256">Endoplasmic reticulum</keyword>
<keyword id="KW-0325">Glycoprotein</keyword>
<keyword id="KW-0472">Membrane</keyword>
<keyword id="KW-1185">Reference proteome</keyword>
<keyword id="KW-0732">Signal</keyword>
<keyword id="KW-0812">Transmembrane</keyword>
<keyword id="KW-1133">Transmembrane helix</keyword>
<keyword id="KW-0879">Wnt signaling pathway</keyword>
<comment type="function">
    <text evidence="1">Restricts trafficking of FAF2 from the endoplasmic reticulum to lipid droplets (By similarity). In association with LMBR1L and E3 ubiquitin-protein ligase AMFR, negatively regulates the canonical Wnt signaling pathway in the lymphocytes by promoting the ubiquitin-mediated degradation of CTNNB1 and Wnt receptors FZD6 and LRP6 (By similarity).</text>
</comment>
<comment type="subunit">
    <text evidence="2">Interacts with LMBR1L, FAF2, AMFR and VCP (By similarity).</text>
</comment>
<comment type="subcellular location">
    <subcellularLocation>
        <location evidence="1">Endoplasmic reticulum membrane</location>
        <topology evidence="3">Multi-pass membrane protein</topology>
    </subcellularLocation>
</comment>
<name>UBAC2_MACFA</name>
<gene>
    <name type="primary">UBAC2</name>
    <name type="synonym">PHGDHL1</name>
    <name type="ORF">QtsA-10993</name>
</gene>